<evidence type="ECO:0000255" key="1">
    <source>
        <dbReference type="HAMAP-Rule" id="MF_01341"/>
    </source>
</evidence>
<evidence type="ECO:0000256" key="2">
    <source>
        <dbReference type="SAM" id="MobiDB-lite"/>
    </source>
</evidence>
<evidence type="ECO:0000305" key="3"/>
<name>RL15_PSYA2</name>
<organism>
    <name type="scientific">Psychrobacter arcticus (strain DSM 17307 / VKM B-2377 / 273-4)</name>
    <dbReference type="NCBI Taxonomy" id="259536"/>
    <lineage>
        <taxon>Bacteria</taxon>
        <taxon>Pseudomonadati</taxon>
        <taxon>Pseudomonadota</taxon>
        <taxon>Gammaproteobacteria</taxon>
        <taxon>Moraxellales</taxon>
        <taxon>Moraxellaceae</taxon>
        <taxon>Psychrobacter</taxon>
    </lineage>
</organism>
<keyword id="KW-1185">Reference proteome</keyword>
<keyword id="KW-0687">Ribonucleoprotein</keyword>
<keyword id="KW-0689">Ribosomal protein</keyword>
<keyword id="KW-0694">RNA-binding</keyword>
<keyword id="KW-0699">rRNA-binding</keyword>
<reference key="1">
    <citation type="journal article" date="2010" name="Appl. Environ. Microbiol.">
        <title>The genome sequence of Psychrobacter arcticus 273-4, a psychroactive Siberian permafrost bacterium, reveals mechanisms for adaptation to low-temperature growth.</title>
        <authorList>
            <person name="Ayala-del-Rio H.L."/>
            <person name="Chain P.S."/>
            <person name="Grzymski J.J."/>
            <person name="Ponder M.A."/>
            <person name="Ivanova N."/>
            <person name="Bergholz P.W."/>
            <person name="Di Bartolo G."/>
            <person name="Hauser L."/>
            <person name="Land M."/>
            <person name="Bakermans C."/>
            <person name="Rodrigues D."/>
            <person name="Klappenbach J."/>
            <person name="Zarka D."/>
            <person name="Larimer F."/>
            <person name="Richardson P."/>
            <person name="Murray A."/>
            <person name="Thomashow M."/>
            <person name="Tiedje J.M."/>
        </authorList>
    </citation>
    <scope>NUCLEOTIDE SEQUENCE [LARGE SCALE GENOMIC DNA]</scope>
    <source>
        <strain>DSM 17307 / VKM B-2377 / 273-4</strain>
    </source>
</reference>
<proteinExistence type="inferred from homology"/>
<protein>
    <recommendedName>
        <fullName evidence="1">Large ribosomal subunit protein uL15</fullName>
    </recommendedName>
    <alternativeName>
        <fullName evidence="3">50S ribosomal protein L15</fullName>
    </alternativeName>
</protein>
<comment type="function">
    <text evidence="1">Binds to the 23S rRNA.</text>
</comment>
<comment type="subunit">
    <text evidence="1">Part of the 50S ribosomal subunit.</text>
</comment>
<comment type="similarity">
    <text evidence="1">Belongs to the universal ribosomal protein uL15 family.</text>
</comment>
<gene>
    <name evidence="1" type="primary">rplO</name>
    <name type="ordered locus">Psyc_0508</name>
</gene>
<sequence length="146" mass="15516">MGLRLNELSPGVGAKKTAQRRGRGIGSGLGKTGGRGVKGQKSRSGSSVRSGFEGGQTPLYRRLPKFGFTSKMAMTTAEVRLSELNQIEGDVVSIETLKAANLIRRDMKRARVMLSGEVTKAYTFKGIKVTKGAKQAIEAAGGSIEE</sequence>
<dbReference type="EMBL" id="CP000082">
    <property type="protein sequence ID" value="AAZ18371.1"/>
    <property type="molecule type" value="Genomic_DNA"/>
</dbReference>
<dbReference type="RefSeq" id="WP_011279803.1">
    <property type="nucleotide sequence ID" value="NC_007204.1"/>
</dbReference>
<dbReference type="SMR" id="Q4FUD7"/>
<dbReference type="STRING" id="259536.Psyc_0508"/>
<dbReference type="KEGG" id="par:Psyc_0508"/>
<dbReference type="eggNOG" id="COG0200">
    <property type="taxonomic scope" value="Bacteria"/>
</dbReference>
<dbReference type="HOGENOM" id="CLU_055188_4_2_6"/>
<dbReference type="OrthoDB" id="9810293at2"/>
<dbReference type="Proteomes" id="UP000000546">
    <property type="component" value="Chromosome"/>
</dbReference>
<dbReference type="GO" id="GO:0022625">
    <property type="term" value="C:cytosolic large ribosomal subunit"/>
    <property type="evidence" value="ECO:0007669"/>
    <property type="project" value="TreeGrafter"/>
</dbReference>
<dbReference type="GO" id="GO:0019843">
    <property type="term" value="F:rRNA binding"/>
    <property type="evidence" value="ECO:0007669"/>
    <property type="project" value="UniProtKB-UniRule"/>
</dbReference>
<dbReference type="GO" id="GO:0003735">
    <property type="term" value="F:structural constituent of ribosome"/>
    <property type="evidence" value="ECO:0007669"/>
    <property type="project" value="InterPro"/>
</dbReference>
<dbReference type="GO" id="GO:0006412">
    <property type="term" value="P:translation"/>
    <property type="evidence" value="ECO:0007669"/>
    <property type="project" value="UniProtKB-UniRule"/>
</dbReference>
<dbReference type="Gene3D" id="3.100.10.10">
    <property type="match status" value="1"/>
</dbReference>
<dbReference type="HAMAP" id="MF_01341">
    <property type="entry name" value="Ribosomal_uL15"/>
    <property type="match status" value="1"/>
</dbReference>
<dbReference type="InterPro" id="IPR030878">
    <property type="entry name" value="Ribosomal_uL15"/>
</dbReference>
<dbReference type="InterPro" id="IPR021131">
    <property type="entry name" value="Ribosomal_uL15/eL18"/>
</dbReference>
<dbReference type="InterPro" id="IPR036227">
    <property type="entry name" value="Ribosomal_uL15/eL18_sf"/>
</dbReference>
<dbReference type="InterPro" id="IPR005749">
    <property type="entry name" value="Ribosomal_uL15_bac-type"/>
</dbReference>
<dbReference type="NCBIfam" id="TIGR01071">
    <property type="entry name" value="rplO_bact"/>
    <property type="match status" value="1"/>
</dbReference>
<dbReference type="PANTHER" id="PTHR12934">
    <property type="entry name" value="50S RIBOSOMAL PROTEIN L15"/>
    <property type="match status" value="1"/>
</dbReference>
<dbReference type="PANTHER" id="PTHR12934:SF11">
    <property type="entry name" value="LARGE RIBOSOMAL SUBUNIT PROTEIN UL15M"/>
    <property type="match status" value="1"/>
</dbReference>
<dbReference type="Pfam" id="PF00828">
    <property type="entry name" value="Ribosomal_L27A"/>
    <property type="match status" value="1"/>
</dbReference>
<dbReference type="SUPFAM" id="SSF52080">
    <property type="entry name" value="Ribosomal proteins L15p and L18e"/>
    <property type="match status" value="1"/>
</dbReference>
<feature type="chain" id="PRO_0000104788" description="Large ribosomal subunit protein uL15">
    <location>
        <begin position="1"/>
        <end position="146"/>
    </location>
</feature>
<feature type="region of interest" description="Disordered" evidence="2">
    <location>
        <begin position="1"/>
        <end position="56"/>
    </location>
</feature>
<feature type="compositionally biased region" description="Gly residues" evidence="2">
    <location>
        <begin position="24"/>
        <end position="37"/>
    </location>
</feature>
<accession>Q4FUD7</accession>